<feature type="signal peptide" evidence="3">
    <location>
        <begin position="1"/>
        <end position="21"/>
    </location>
</feature>
<feature type="propeptide" id="PRO_0000034894" evidence="1">
    <location>
        <begin position="22"/>
        <end position="49"/>
    </location>
</feature>
<feature type="peptide" id="PRO_0000034895" description="Alpha-conotoxin-like Tx2">
    <location>
        <begin position="50"/>
        <end position="66"/>
    </location>
</feature>
<feature type="region of interest" description="Ser-Xaa-Pro motif, crucial for potent interaction with nAChR" evidence="2">
    <location>
        <begin position="53"/>
        <end position="55"/>
    </location>
</feature>
<feature type="disulfide bond" evidence="2">
    <location>
        <begin position="51"/>
        <end position="57"/>
    </location>
</feature>
<feature type="disulfide bond" evidence="2">
    <location>
        <begin position="52"/>
        <end position="65"/>
    </location>
</feature>
<sequence length="66" mass="7255">MGMRMMFTVFLLVVLATTVVSFTSGRRTFHGRNAAAKASGLVSLTDRRPECCSHPACNVDHPEICR</sequence>
<proteinExistence type="inferred from homology"/>
<reference key="1">
    <citation type="journal article" date="1999" name="Peptides">
        <title>Conopeptides from Conus striatus and Conus textile by cDNA cloning.</title>
        <authorList>
            <person name="Lu B.-S."/>
            <person name="Yu F."/>
            <person name="Zhao D."/>
            <person name="Huang P.-T."/>
            <person name="Huang C.-F."/>
        </authorList>
    </citation>
    <scope>NUCLEOTIDE SEQUENCE [MRNA]</scope>
    <source>
        <tissue>Venom duct</tissue>
    </source>
</reference>
<keyword id="KW-0008">Acetylcholine receptor inhibiting toxin</keyword>
<keyword id="KW-1015">Disulfide bond</keyword>
<keyword id="KW-0872">Ion channel impairing toxin</keyword>
<keyword id="KW-0528">Neurotoxin</keyword>
<keyword id="KW-0629">Postsynaptic neurotoxin</keyword>
<keyword id="KW-0964">Secreted</keyword>
<keyword id="KW-0732">Signal</keyword>
<keyword id="KW-0800">Toxin</keyword>
<protein>
    <recommendedName>
        <fullName>Alpha-conotoxin-like Tx2</fullName>
    </recommendedName>
</protein>
<evidence type="ECO:0000250" key="1"/>
<evidence type="ECO:0000250" key="2">
    <source>
        <dbReference type="UniProtKB" id="P56636"/>
    </source>
</evidence>
<evidence type="ECO:0000255" key="3"/>
<evidence type="ECO:0000305" key="4"/>
<evidence type="ECO:0000305" key="5">
    <source>
    </source>
</evidence>
<accession>Q9XZK7</accession>
<name>CA2_CONTE</name>
<comment type="function">
    <text evidence="1">Alpha-conotoxins act on postsynaptic membranes, they bind to the nicotinic acetylcholine receptors (nAChR) and thus inhibit them.</text>
</comment>
<comment type="subcellular location">
    <subcellularLocation>
        <location evidence="5">Secreted</location>
    </subcellularLocation>
</comment>
<comment type="tissue specificity">
    <text evidence="5">Expressed by the venom duct.</text>
</comment>
<comment type="domain">
    <text evidence="4">The cysteine framework is I (CC-C-C). Alpha4/7 pattern.</text>
</comment>
<comment type="similarity">
    <text evidence="4">Belongs to the conotoxin A superfamily.</text>
</comment>
<organism>
    <name type="scientific">Conus textile</name>
    <name type="common">Cloth-of-gold cone</name>
    <dbReference type="NCBI Taxonomy" id="6494"/>
    <lineage>
        <taxon>Eukaryota</taxon>
        <taxon>Metazoa</taxon>
        <taxon>Spiralia</taxon>
        <taxon>Lophotrochozoa</taxon>
        <taxon>Mollusca</taxon>
        <taxon>Gastropoda</taxon>
        <taxon>Caenogastropoda</taxon>
        <taxon>Neogastropoda</taxon>
        <taxon>Conoidea</taxon>
        <taxon>Conidae</taxon>
        <taxon>Conus</taxon>
        <taxon>Cylinder</taxon>
    </lineage>
</organism>
<dbReference type="EMBL" id="AF146353">
    <property type="protein sequence ID" value="AAD31913.1"/>
    <property type="molecule type" value="mRNA"/>
</dbReference>
<dbReference type="BMRB" id="Q9XZK7"/>
<dbReference type="ConoServer" id="53">
    <property type="toxin name" value="Tx2 precursor"/>
</dbReference>
<dbReference type="GO" id="GO:0005576">
    <property type="term" value="C:extracellular region"/>
    <property type="evidence" value="ECO:0007669"/>
    <property type="project" value="UniProtKB-SubCell"/>
</dbReference>
<dbReference type="GO" id="GO:0035792">
    <property type="term" value="C:host cell postsynaptic membrane"/>
    <property type="evidence" value="ECO:0007669"/>
    <property type="project" value="UniProtKB-KW"/>
</dbReference>
<dbReference type="GO" id="GO:0030550">
    <property type="term" value="F:acetylcholine receptor inhibitor activity"/>
    <property type="evidence" value="ECO:0007669"/>
    <property type="project" value="UniProtKB-KW"/>
</dbReference>
<dbReference type="GO" id="GO:0099106">
    <property type="term" value="F:ion channel regulator activity"/>
    <property type="evidence" value="ECO:0007669"/>
    <property type="project" value="UniProtKB-KW"/>
</dbReference>
<dbReference type="GO" id="GO:0090729">
    <property type="term" value="F:toxin activity"/>
    <property type="evidence" value="ECO:0007669"/>
    <property type="project" value="UniProtKB-KW"/>
</dbReference>
<dbReference type="InterPro" id="IPR009958">
    <property type="entry name" value="Conotoxin_a-typ"/>
</dbReference>
<dbReference type="InterPro" id="IPR018072">
    <property type="entry name" value="Conotoxin_a-typ_CS"/>
</dbReference>
<dbReference type="Pfam" id="PF07365">
    <property type="entry name" value="Toxin_8"/>
    <property type="match status" value="1"/>
</dbReference>
<dbReference type="PROSITE" id="PS60014">
    <property type="entry name" value="ALPHA_CONOTOXIN"/>
    <property type="match status" value="1"/>
</dbReference>